<name>CSPLA_ORYSJ</name>
<sequence length="209" mass="22132">MSKMAEEKVLAAPATVDGGMQSSGDLQASSAAAARVRPVETLLRAAPLGLCVAAMAIMLRNSVTNEYGTVSYSDLGGFKYLVYANGLCAAYSLASAFYIAVPRPATLSRSWVVFLLDQVFTYLILAAGAASAELLYLAYNGDKEVTWSEACGVFGGFCRQARTSVAITFASVACYILLSLISSYRLFSAYDPPQPSLGNKGVEIAAFPR</sequence>
<evidence type="ECO:0000250" key="1"/>
<evidence type="ECO:0000255" key="2"/>
<evidence type="ECO:0000305" key="3"/>
<organism>
    <name type="scientific">Oryza sativa subsp. japonica</name>
    <name type="common">Rice</name>
    <dbReference type="NCBI Taxonomy" id="39947"/>
    <lineage>
        <taxon>Eukaryota</taxon>
        <taxon>Viridiplantae</taxon>
        <taxon>Streptophyta</taxon>
        <taxon>Embryophyta</taxon>
        <taxon>Tracheophyta</taxon>
        <taxon>Spermatophyta</taxon>
        <taxon>Magnoliopsida</taxon>
        <taxon>Liliopsida</taxon>
        <taxon>Poales</taxon>
        <taxon>Poaceae</taxon>
        <taxon>BOP clade</taxon>
        <taxon>Oryzoideae</taxon>
        <taxon>Oryzeae</taxon>
        <taxon>Oryzinae</taxon>
        <taxon>Oryza</taxon>
        <taxon>Oryza sativa</taxon>
    </lineage>
</organism>
<reference key="1">
    <citation type="journal article" date="2002" name="Nature">
        <title>Sequence and analysis of rice chromosome 4.</title>
        <authorList>
            <person name="Feng Q."/>
            <person name="Zhang Y."/>
            <person name="Hao P."/>
            <person name="Wang S."/>
            <person name="Fu G."/>
            <person name="Huang Y."/>
            <person name="Li Y."/>
            <person name="Zhu J."/>
            <person name="Liu Y."/>
            <person name="Hu X."/>
            <person name="Jia P."/>
            <person name="Zhang Y."/>
            <person name="Zhao Q."/>
            <person name="Ying K."/>
            <person name="Yu S."/>
            <person name="Tang Y."/>
            <person name="Weng Q."/>
            <person name="Zhang L."/>
            <person name="Lu Y."/>
            <person name="Mu J."/>
            <person name="Lu Y."/>
            <person name="Zhang L.S."/>
            <person name="Yu Z."/>
            <person name="Fan D."/>
            <person name="Liu X."/>
            <person name="Lu T."/>
            <person name="Li C."/>
            <person name="Wu Y."/>
            <person name="Sun T."/>
            <person name="Lei H."/>
            <person name="Li T."/>
            <person name="Hu H."/>
            <person name="Guan J."/>
            <person name="Wu M."/>
            <person name="Zhang R."/>
            <person name="Zhou B."/>
            <person name="Chen Z."/>
            <person name="Chen L."/>
            <person name="Jin Z."/>
            <person name="Wang R."/>
            <person name="Yin H."/>
            <person name="Cai Z."/>
            <person name="Ren S."/>
            <person name="Lv G."/>
            <person name="Gu W."/>
            <person name="Zhu G."/>
            <person name="Tu Y."/>
            <person name="Jia J."/>
            <person name="Zhang Y."/>
            <person name="Chen J."/>
            <person name="Kang H."/>
            <person name="Chen X."/>
            <person name="Shao C."/>
            <person name="Sun Y."/>
            <person name="Hu Q."/>
            <person name="Zhang X."/>
            <person name="Zhang W."/>
            <person name="Wang L."/>
            <person name="Ding C."/>
            <person name="Sheng H."/>
            <person name="Gu J."/>
            <person name="Chen S."/>
            <person name="Ni L."/>
            <person name="Zhu F."/>
            <person name="Chen W."/>
            <person name="Lan L."/>
            <person name="Lai Y."/>
            <person name="Cheng Z."/>
            <person name="Gu M."/>
            <person name="Jiang J."/>
            <person name="Li J."/>
            <person name="Hong G."/>
            <person name="Xue Y."/>
            <person name="Han B."/>
        </authorList>
    </citation>
    <scope>NUCLEOTIDE SEQUENCE [LARGE SCALE GENOMIC DNA]</scope>
    <source>
        <strain>cv. Nipponbare</strain>
    </source>
</reference>
<reference key="2">
    <citation type="journal article" date="2005" name="Nature">
        <title>The map-based sequence of the rice genome.</title>
        <authorList>
            <consortium name="International rice genome sequencing project (IRGSP)"/>
        </authorList>
    </citation>
    <scope>NUCLEOTIDE SEQUENCE [LARGE SCALE GENOMIC DNA]</scope>
    <source>
        <strain>cv. Nipponbare</strain>
    </source>
</reference>
<reference key="3">
    <citation type="journal article" date="2008" name="Nucleic Acids Res.">
        <title>The rice annotation project database (RAP-DB): 2008 update.</title>
        <authorList>
            <consortium name="The rice annotation project (RAP)"/>
        </authorList>
    </citation>
    <scope>GENOME REANNOTATION</scope>
    <source>
        <strain>cv. Nipponbare</strain>
    </source>
</reference>
<reference key="4">
    <citation type="journal article" date="2013" name="Rice">
        <title>Improvement of the Oryza sativa Nipponbare reference genome using next generation sequence and optical map data.</title>
        <authorList>
            <person name="Kawahara Y."/>
            <person name="de la Bastide M."/>
            <person name="Hamilton J.P."/>
            <person name="Kanamori H."/>
            <person name="McCombie W.R."/>
            <person name="Ouyang S."/>
            <person name="Schwartz D.C."/>
            <person name="Tanaka T."/>
            <person name="Wu J."/>
            <person name="Zhou S."/>
            <person name="Childs K.L."/>
            <person name="Davidson R.M."/>
            <person name="Lin H."/>
            <person name="Quesada-Ocampo L."/>
            <person name="Vaillancourt B."/>
            <person name="Sakai H."/>
            <person name="Lee S.S."/>
            <person name="Kim J."/>
            <person name="Numa H."/>
            <person name="Itoh T."/>
            <person name="Buell C.R."/>
            <person name="Matsumoto T."/>
        </authorList>
    </citation>
    <scope>GENOME REANNOTATION</scope>
    <source>
        <strain>cv. Nipponbare</strain>
    </source>
</reference>
<reference key="5">
    <citation type="journal article" date="2005" name="PLoS Biol.">
        <title>The genomes of Oryza sativa: a history of duplications.</title>
        <authorList>
            <person name="Yu J."/>
            <person name="Wang J."/>
            <person name="Lin W."/>
            <person name="Li S."/>
            <person name="Li H."/>
            <person name="Zhou J."/>
            <person name="Ni P."/>
            <person name="Dong W."/>
            <person name="Hu S."/>
            <person name="Zeng C."/>
            <person name="Zhang J."/>
            <person name="Zhang Y."/>
            <person name="Li R."/>
            <person name="Xu Z."/>
            <person name="Li S."/>
            <person name="Li X."/>
            <person name="Zheng H."/>
            <person name="Cong L."/>
            <person name="Lin L."/>
            <person name="Yin J."/>
            <person name="Geng J."/>
            <person name="Li G."/>
            <person name="Shi J."/>
            <person name="Liu J."/>
            <person name="Lv H."/>
            <person name="Li J."/>
            <person name="Wang J."/>
            <person name="Deng Y."/>
            <person name="Ran L."/>
            <person name="Shi X."/>
            <person name="Wang X."/>
            <person name="Wu Q."/>
            <person name="Li C."/>
            <person name="Ren X."/>
            <person name="Wang J."/>
            <person name="Wang X."/>
            <person name="Li D."/>
            <person name="Liu D."/>
            <person name="Zhang X."/>
            <person name="Ji Z."/>
            <person name="Zhao W."/>
            <person name="Sun Y."/>
            <person name="Zhang Z."/>
            <person name="Bao J."/>
            <person name="Han Y."/>
            <person name="Dong L."/>
            <person name="Ji J."/>
            <person name="Chen P."/>
            <person name="Wu S."/>
            <person name="Liu J."/>
            <person name="Xiao Y."/>
            <person name="Bu D."/>
            <person name="Tan J."/>
            <person name="Yang L."/>
            <person name="Ye C."/>
            <person name="Zhang J."/>
            <person name="Xu J."/>
            <person name="Zhou Y."/>
            <person name="Yu Y."/>
            <person name="Zhang B."/>
            <person name="Zhuang S."/>
            <person name="Wei H."/>
            <person name="Liu B."/>
            <person name="Lei M."/>
            <person name="Yu H."/>
            <person name="Li Y."/>
            <person name="Xu H."/>
            <person name="Wei S."/>
            <person name="He X."/>
            <person name="Fang L."/>
            <person name="Zhang Z."/>
            <person name="Zhang Y."/>
            <person name="Huang X."/>
            <person name="Su Z."/>
            <person name="Tong W."/>
            <person name="Li J."/>
            <person name="Tong Z."/>
            <person name="Li S."/>
            <person name="Ye J."/>
            <person name="Wang L."/>
            <person name="Fang L."/>
            <person name="Lei T."/>
            <person name="Chen C.-S."/>
            <person name="Chen H.-C."/>
            <person name="Xu Z."/>
            <person name="Li H."/>
            <person name="Huang H."/>
            <person name="Zhang F."/>
            <person name="Xu H."/>
            <person name="Li N."/>
            <person name="Zhao C."/>
            <person name="Li S."/>
            <person name="Dong L."/>
            <person name="Huang Y."/>
            <person name="Li L."/>
            <person name="Xi Y."/>
            <person name="Qi Q."/>
            <person name="Li W."/>
            <person name="Zhang B."/>
            <person name="Hu W."/>
            <person name="Zhang Y."/>
            <person name="Tian X."/>
            <person name="Jiao Y."/>
            <person name="Liang X."/>
            <person name="Jin J."/>
            <person name="Gao L."/>
            <person name="Zheng W."/>
            <person name="Hao B."/>
            <person name="Liu S.-M."/>
            <person name="Wang W."/>
            <person name="Yuan L."/>
            <person name="Cao M."/>
            <person name="McDermott J."/>
            <person name="Samudrala R."/>
            <person name="Wang J."/>
            <person name="Wong G.K.-S."/>
            <person name="Yang H."/>
        </authorList>
    </citation>
    <scope>NUCLEOTIDE SEQUENCE [LARGE SCALE GENOMIC DNA]</scope>
    <source>
        <strain>cv. Nipponbare</strain>
    </source>
</reference>
<reference key="6">
    <citation type="journal article" date="2003" name="Science">
        <title>Collection, mapping, and annotation of over 28,000 cDNA clones from japonica rice.</title>
        <authorList>
            <consortium name="The rice full-length cDNA consortium"/>
        </authorList>
    </citation>
    <scope>NUCLEOTIDE SEQUENCE [LARGE SCALE MRNA]</scope>
    <source>
        <strain>cv. Nipponbare</strain>
    </source>
</reference>
<reference key="7">
    <citation type="journal article" date="2014" name="Plant Physiol.">
        <title>Functional and evolutionary analysis of the CASPARIAN STRIP MEMBRANE DOMAIN PROTEIN family.</title>
        <authorList>
            <person name="Roppolo D."/>
            <person name="Boeckmann B."/>
            <person name="Pfister A."/>
            <person name="Boutet E."/>
            <person name="Rubio M.C."/>
            <person name="Denervaud-Tendon V."/>
            <person name="Vermeer J.E."/>
            <person name="Gheyselinck J."/>
            <person name="Xenarios I."/>
            <person name="Geldner N."/>
        </authorList>
    </citation>
    <scope>GENE FAMILY</scope>
    <scope>NOMENCLATURE</scope>
</reference>
<protein>
    <recommendedName>
        <fullName>CASP-like protein 2A1</fullName>
        <shortName>OsCASPL2A1</shortName>
    </recommendedName>
</protein>
<feature type="chain" id="PRO_0000370297" description="CASP-like protein 2A1">
    <location>
        <begin position="1"/>
        <end position="209"/>
    </location>
</feature>
<feature type="topological domain" description="Cytoplasmic" evidence="2">
    <location>
        <begin position="1"/>
        <end position="38"/>
    </location>
</feature>
<feature type="transmembrane region" description="Helical" evidence="2">
    <location>
        <begin position="39"/>
        <end position="59"/>
    </location>
</feature>
<feature type="topological domain" description="Extracellular" evidence="2">
    <location>
        <begin position="60"/>
        <end position="80"/>
    </location>
</feature>
<feature type="transmembrane region" description="Helical" evidence="2">
    <location>
        <begin position="81"/>
        <end position="101"/>
    </location>
</feature>
<feature type="topological domain" description="Cytoplasmic" evidence="2">
    <location>
        <begin position="102"/>
        <end position="109"/>
    </location>
</feature>
<feature type="transmembrane region" description="Helical" evidence="2">
    <location>
        <begin position="110"/>
        <end position="130"/>
    </location>
</feature>
<feature type="topological domain" description="Extracellular" evidence="2">
    <location>
        <begin position="131"/>
        <end position="163"/>
    </location>
</feature>
<feature type="transmembrane region" description="Helical" evidence="2">
    <location>
        <begin position="164"/>
        <end position="184"/>
    </location>
</feature>
<feature type="topological domain" description="Cytoplasmic" evidence="2">
    <location>
        <begin position="185"/>
        <end position="209"/>
    </location>
</feature>
<keyword id="KW-1003">Cell membrane</keyword>
<keyword id="KW-0472">Membrane</keyword>
<keyword id="KW-1185">Reference proteome</keyword>
<keyword id="KW-0812">Transmembrane</keyword>
<keyword id="KW-1133">Transmembrane helix</keyword>
<proteinExistence type="evidence at transcript level"/>
<comment type="subunit">
    <text evidence="1">Homodimer and heterodimers.</text>
</comment>
<comment type="subcellular location">
    <subcellularLocation>
        <location evidence="1">Cell membrane</location>
        <topology evidence="1">Multi-pass membrane protein</topology>
    </subcellularLocation>
</comment>
<comment type="similarity">
    <text evidence="3">Belongs to the Casparian strip membrane proteins (CASP) family.</text>
</comment>
<comment type="sequence caution" evidence="3">
    <conflict type="erroneous initiation">
        <sequence resource="EMBL-CDS" id="CAD39788"/>
    </conflict>
    <text>Truncated N-terminus.</text>
</comment>
<comment type="sequence caution" evidence="3">
    <conflict type="erroneous initiation">
        <sequence resource="EMBL-CDS" id="CAE05079"/>
    </conflict>
    <text>Truncated N-terminus.</text>
</comment>
<accession>Q0JEF7</accession>
<accession>A0A0P0W8K0</accession>
<accession>Q7XLK9</accession>
<accession>Q7XX27</accession>
<gene>
    <name type="ordered locus">Os04g0281900</name>
    <name type="ordered locus">LOC_Os04g21320</name>
    <name type="ORF">OsJ_14118</name>
    <name type="ORF">OSJNBa0071G03.1</name>
    <name type="ORF">OSJNBa0094P09.18</name>
</gene>
<dbReference type="EMBL" id="AL662975">
    <property type="protein sequence ID" value="CAD39788.2"/>
    <property type="status" value="ALT_INIT"/>
    <property type="molecule type" value="Genomic_DNA"/>
</dbReference>
<dbReference type="EMBL" id="AL731625">
    <property type="protein sequence ID" value="CAE05079.2"/>
    <property type="status" value="ALT_INIT"/>
    <property type="molecule type" value="Genomic_DNA"/>
</dbReference>
<dbReference type="EMBL" id="AP008210">
    <property type="protein sequence ID" value="BAF14280.1"/>
    <property type="molecule type" value="Genomic_DNA"/>
</dbReference>
<dbReference type="EMBL" id="AP014960">
    <property type="protein sequence ID" value="BAS88375.1"/>
    <property type="molecule type" value="Genomic_DNA"/>
</dbReference>
<dbReference type="EMBL" id="CM000141">
    <property type="protein sequence ID" value="EEE60665.1"/>
    <property type="molecule type" value="Genomic_DNA"/>
</dbReference>
<dbReference type="EMBL" id="AK061149">
    <property type="protein sequence ID" value="BAG87760.1"/>
    <property type="molecule type" value="mRNA"/>
</dbReference>
<dbReference type="RefSeq" id="XP_015633940.1">
    <property type="nucleotide sequence ID" value="XM_015778454.1"/>
</dbReference>
<dbReference type="FunCoup" id="Q0JEF7">
    <property type="interactions" value="1596"/>
</dbReference>
<dbReference type="PaxDb" id="39947-Q0JEF7"/>
<dbReference type="EnsemblPlants" id="Os04t0281900-01">
    <property type="protein sequence ID" value="Os04t0281900-01"/>
    <property type="gene ID" value="Os04g0281900"/>
</dbReference>
<dbReference type="Gramene" id="Os04t0281900-01">
    <property type="protein sequence ID" value="Os04t0281900-01"/>
    <property type="gene ID" value="Os04g0281900"/>
</dbReference>
<dbReference type="KEGG" id="dosa:Os04g0281900"/>
<dbReference type="eggNOG" id="ENOG502S0J7">
    <property type="taxonomic scope" value="Eukaryota"/>
</dbReference>
<dbReference type="HOGENOM" id="CLU_066104_2_2_1"/>
<dbReference type="InParanoid" id="Q0JEF7"/>
<dbReference type="OMA" id="TWSQACG"/>
<dbReference type="OrthoDB" id="749363at2759"/>
<dbReference type="Proteomes" id="UP000000763">
    <property type="component" value="Chromosome 4"/>
</dbReference>
<dbReference type="Proteomes" id="UP000007752">
    <property type="component" value="Chromosome 4"/>
</dbReference>
<dbReference type="Proteomes" id="UP000059680">
    <property type="component" value="Chromosome 4"/>
</dbReference>
<dbReference type="ExpressionAtlas" id="Q0JEF7">
    <property type="expression patterns" value="baseline and differential"/>
</dbReference>
<dbReference type="GO" id="GO:0005886">
    <property type="term" value="C:plasma membrane"/>
    <property type="evidence" value="ECO:0007669"/>
    <property type="project" value="UniProtKB-SubCell"/>
</dbReference>
<dbReference type="InterPro" id="IPR006459">
    <property type="entry name" value="CASP/CASPL"/>
</dbReference>
<dbReference type="InterPro" id="IPR006702">
    <property type="entry name" value="CASP_dom"/>
</dbReference>
<dbReference type="NCBIfam" id="TIGR01569">
    <property type="entry name" value="A_tha_TIGR01569"/>
    <property type="match status" value="1"/>
</dbReference>
<dbReference type="PANTHER" id="PTHR33573:SF46">
    <property type="entry name" value="CASP-LIKE PROTEIN 2A1"/>
    <property type="match status" value="1"/>
</dbReference>
<dbReference type="PANTHER" id="PTHR33573">
    <property type="entry name" value="CASP-LIKE PROTEIN 4A4"/>
    <property type="match status" value="1"/>
</dbReference>
<dbReference type="Pfam" id="PF04535">
    <property type="entry name" value="CASP_dom"/>
    <property type="match status" value="1"/>
</dbReference>